<accession>Q97BV2</accession>
<sequence length="181" mass="20210">MRSVITGVAGVGKTTVLDIVARESGIPVVNYGTLMFEVAKRRGLVENRDQIRKLSRETQVDLQKLAGEEIGKMENAIVDTHMSIKTPFGYLPGLPEWVLRSINASVFVIIEADPAIIKRRRDNDPTRARDDEGVDSIREHQEMNRYFAAAYSIFSGATVKIVKNEEGKPEQAADEIVRVIK</sequence>
<feature type="chain" id="PRO_0000131829" description="Adenylate kinase">
    <location>
        <begin position="1"/>
        <end position="181"/>
    </location>
</feature>
<feature type="binding site" evidence="1">
    <location>
        <begin position="7"/>
        <end position="15"/>
    </location>
    <ligand>
        <name>ATP</name>
        <dbReference type="ChEBI" id="CHEBI:30616"/>
    </ligand>
</feature>
<reference key="1">
    <citation type="journal article" date="2000" name="Proc. Natl. Acad. Sci. U.S.A.">
        <title>Archaeal adaptation to higher temperatures revealed by genomic sequence of Thermoplasma volcanium.</title>
        <authorList>
            <person name="Kawashima T."/>
            <person name="Amano N."/>
            <person name="Koike H."/>
            <person name="Makino S."/>
            <person name="Higuchi S."/>
            <person name="Kawashima-Ohya Y."/>
            <person name="Watanabe K."/>
            <person name="Yamazaki M."/>
            <person name="Kanehori K."/>
            <person name="Kawamoto T."/>
            <person name="Nunoshiba T."/>
            <person name="Yamamoto Y."/>
            <person name="Aramaki H."/>
            <person name="Makino K."/>
            <person name="Suzuki M."/>
        </authorList>
    </citation>
    <scope>NUCLEOTIDE SEQUENCE [LARGE SCALE GENOMIC DNA]</scope>
    <source>
        <strain>ATCC 51530 / DSM 4299 / JCM 9571 / NBRC 15438 / GSS1</strain>
    </source>
</reference>
<comment type="catalytic activity">
    <reaction>
        <text>AMP + ATP = 2 ADP</text>
        <dbReference type="Rhea" id="RHEA:12973"/>
        <dbReference type="ChEBI" id="CHEBI:30616"/>
        <dbReference type="ChEBI" id="CHEBI:456215"/>
        <dbReference type="ChEBI" id="CHEBI:456216"/>
        <dbReference type="EC" id="2.7.4.3"/>
    </reaction>
</comment>
<comment type="subcellular location">
    <subcellularLocation>
        <location evidence="1">Cytoplasm</location>
    </subcellularLocation>
</comment>
<comment type="similarity">
    <text evidence="2">Belongs to the archaeal adenylate kinase family.</text>
</comment>
<proteinExistence type="inferred from homology"/>
<keyword id="KW-0067">ATP-binding</keyword>
<keyword id="KW-0963">Cytoplasm</keyword>
<keyword id="KW-0418">Kinase</keyword>
<keyword id="KW-0547">Nucleotide-binding</keyword>
<keyword id="KW-0808">Transferase</keyword>
<organism>
    <name type="scientific">Thermoplasma volcanium (strain ATCC 51530 / DSM 4299 / JCM 9571 / NBRC 15438 / GSS1)</name>
    <dbReference type="NCBI Taxonomy" id="273116"/>
    <lineage>
        <taxon>Archaea</taxon>
        <taxon>Methanobacteriati</taxon>
        <taxon>Thermoplasmatota</taxon>
        <taxon>Thermoplasmata</taxon>
        <taxon>Thermoplasmatales</taxon>
        <taxon>Thermoplasmataceae</taxon>
        <taxon>Thermoplasma</taxon>
    </lineage>
</organism>
<evidence type="ECO:0000250" key="1"/>
<evidence type="ECO:0000305" key="2"/>
<gene>
    <name type="primary">adkA</name>
    <name type="ordered locus">TV0353</name>
    <name type="ORF">TVG0345885</name>
</gene>
<protein>
    <recommendedName>
        <fullName>Adenylate kinase</fullName>
        <shortName>AK</shortName>
        <ecNumber>2.7.4.3</ecNumber>
    </recommendedName>
    <alternativeName>
        <fullName>ATP-AMP transphosphorylase</fullName>
    </alternativeName>
</protein>
<dbReference type="EC" id="2.7.4.3"/>
<dbReference type="EMBL" id="BA000011">
    <property type="protein sequence ID" value="BAB59495.1"/>
    <property type="molecule type" value="Genomic_DNA"/>
</dbReference>
<dbReference type="RefSeq" id="WP_010916607.1">
    <property type="nucleotide sequence ID" value="NC_002689.2"/>
</dbReference>
<dbReference type="SMR" id="Q97BV2"/>
<dbReference type="STRING" id="273116.gene:9381130"/>
<dbReference type="PaxDb" id="273116-14324568"/>
<dbReference type="GeneID" id="1440865"/>
<dbReference type="KEGG" id="tvo:TVG0345885"/>
<dbReference type="eggNOG" id="arCOG01039">
    <property type="taxonomic scope" value="Archaea"/>
</dbReference>
<dbReference type="HOGENOM" id="CLU_119371_0_0_2"/>
<dbReference type="OrthoDB" id="26198at2157"/>
<dbReference type="PhylomeDB" id="Q97BV2"/>
<dbReference type="Proteomes" id="UP000001017">
    <property type="component" value="Chromosome"/>
</dbReference>
<dbReference type="GO" id="GO:0005737">
    <property type="term" value="C:cytoplasm"/>
    <property type="evidence" value="ECO:0007669"/>
    <property type="project" value="UniProtKB-SubCell"/>
</dbReference>
<dbReference type="GO" id="GO:0004017">
    <property type="term" value="F:adenylate kinase activity"/>
    <property type="evidence" value="ECO:0007669"/>
    <property type="project" value="UniProtKB-UniRule"/>
</dbReference>
<dbReference type="GO" id="GO:0005524">
    <property type="term" value="F:ATP binding"/>
    <property type="evidence" value="ECO:0007669"/>
    <property type="project" value="UniProtKB-UniRule"/>
</dbReference>
<dbReference type="Gene3D" id="3.40.50.300">
    <property type="entry name" value="P-loop containing nucleotide triphosphate hydrolases"/>
    <property type="match status" value="1"/>
</dbReference>
<dbReference type="HAMAP" id="MF_00234">
    <property type="entry name" value="Adenylate_kinase_AdkA"/>
    <property type="match status" value="1"/>
</dbReference>
<dbReference type="InterPro" id="IPR023477">
    <property type="entry name" value="Adenylate_kinase_AdkA"/>
</dbReference>
<dbReference type="InterPro" id="IPR027417">
    <property type="entry name" value="P-loop_NTPase"/>
</dbReference>
<dbReference type="NCBIfam" id="NF003122">
    <property type="entry name" value="PRK04040.1"/>
    <property type="match status" value="1"/>
</dbReference>
<dbReference type="Pfam" id="PF13207">
    <property type="entry name" value="AAA_17"/>
    <property type="match status" value="1"/>
</dbReference>
<dbReference type="SUPFAM" id="SSF52540">
    <property type="entry name" value="P-loop containing nucleoside triphosphate hydrolases"/>
    <property type="match status" value="1"/>
</dbReference>
<name>KADA_THEVO</name>